<name>HIP1_YEAST</name>
<accession>P06775</accession>
<accession>D6VUX3</accession>
<organism>
    <name type="scientific">Saccharomyces cerevisiae (strain ATCC 204508 / S288c)</name>
    <name type="common">Baker's yeast</name>
    <dbReference type="NCBI Taxonomy" id="559292"/>
    <lineage>
        <taxon>Eukaryota</taxon>
        <taxon>Fungi</taxon>
        <taxon>Dikarya</taxon>
        <taxon>Ascomycota</taxon>
        <taxon>Saccharomycotina</taxon>
        <taxon>Saccharomycetes</taxon>
        <taxon>Saccharomycetales</taxon>
        <taxon>Saccharomycetaceae</taxon>
        <taxon>Saccharomyces</taxon>
    </lineage>
</organism>
<sequence>MPRNPLKKEYWADVVDGFKPATSPAFENEKESTTFVTELTSKTDSAFPLSSKDSPGINQTTNDITSSDRFRRNEDTEQEDINNTNLSKDLSVRHLLTLAVGGAIGTGLYVNTGAALSTGGPASLVIDWVIISTCLFTVINSLGELSAAFPVVGGFNVYSMRFIEPSFAFAVNLNYLAQWLVLLPLELVAASITIKYWNDKINSDAWVAIFYATIALANMLDVKSFGETEFVLSMIKILSIIGFTILGIVLSCGGGPHGGYIGGKYWHDPGAFVGHSSGTQFKGLCSVFVTAAFSYSGIEMTAVSAAESKNPRETIPKAAKRTFWLITASYVTILTLIGCLVPSNDPRLLNGSSSVDAASSPLVIAIENGGIKGLPSLMNAIILIAVVSVANSAVYACSRCMVAMAHIGNLPKFLNRVDKRGRPMNAILLTLFFGLLSFVAASDKQAEVFTWLSALSGLSTIFCWMAINLSHIRFRQAMKVQERSLDELPFISQTGVKGSWYGFIVLFLVLIASFWTSLFPLGGSGASAESFFEGYLSFPILIVCYVGHKLYTRNWTLMVKLEDMDLDTGRKQVDLTLRREEMRIERETLAKRSFVTRFLHFWC</sequence>
<dbReference type="EMBL" id="M11980">
    <property type="protein sequence ID" value="AAA34673.1"/>
    <property type="molecule type" value="Genomic_DNA"/>
</dbReference>
<dbReference type="EMBL" id="X82408">
    <property type="protein sequence ID" value="CAA57802.1"/>
    <property type="molecule type" value="Genomic_DNA"/>
</dbReference>
<dbReference type="EMBL" id="Z72975">
    <property type="protein sequence ID" value="CAA97217.1"/>
    <property type="molecule type" value="Genomic_DNA"/>
</dbReference>
<dbReference type="EMBL" id="BK006941">
    <property type="protein sequence ID" value="DAA08284.1"/>
    <property type="molecule type" value="Genomic_DNA"/>
</dbReference>
<dbReference type="PIR" id="S55869">
    <property type="entry name" value="S55869"/>
</dbReference>
<dbReference type="RefSeq" id="NP_011707.1">
    <property type="nucleotide sequence ID" value="NM_001181320.1"/>
</dbReference>
<dbReference type="SMR" id="P06775"/>
<dbReference type="BioGRID" id="33444">
    <property type="interactions" value="29"/>
</dbReference>
<dbReference type="DIP" id="DIP-5549N"/>
<dbReference type="FunCoup" id="P06775">
    <property type="interactions" value="234"/>
</dbReference>
<dbReference type="IntAct" id="P06775">
    <property type="interactions" value="5"/>
</dbReference>
<dbReference type="MINT" id="P06775"/>
<dbReference type="STRING" id="4932.YGR191W"/>
<dbReference type="TCDB" id="2.A.3.10.1">
    <property type="family name" value="the amino acid-polyamine-organocation (apc) family"/>
</dbReference>
<dbReference type="iPTMnet" id="P06775"/>
<dbReference type="SwissPalm" id="P06775"/>
<dbReference type="PaxDb" id="4932-YGR191W"/>
<dbReference type="PeptideAtlas" id="P06775"/>
<dbReference type="EnsemblFungi" id="YGR191W_mRNA">
    <property type="protein sequence ID" value="YGR191W"/>
    <property type="gene ID" value="YGR191W"/>
</dbReference>
<dbReference type="GeneID" id="853104"/>
<dbReference type="KEGG" id="sce:YGR191W"/>
<dbReference type="AGR" id="SGD:S000003423"/>
<dbReference type="SGD" id="S000003423">
    <property type="gene designation" value="HIP1"/>
</dbReference>
<dbReference type="VEuPathDB" id="FungiDB:YGR191W"/>
<dbReference type="eggNOG" id="KOG1286">
    <property type="taxonomic scope" value="Eukaryota"/>
</dbReference>
<dbReference type="HOGENOM" id="CLU_007946_12_0_1"/>
<dbReference type="InParanoid" id="P06775"/>
<dbReference type="OMA" id="FCWFAIN"/>
<dbReference type="OrthoDB" id="3900342at2759"/>
<dbReference type="BioCyc" id="YEAST:G3O-30880-MONOMER"/>
<dbReference type="BioGRID-ORCS" id="853104">
    <property type="hits" value="0 hits in 10 CRISPR screens"/>
</dbReference>
<dbReference type="PRO" id="PR:P06775"/>
<dbReference type="Proteomes" id="UP000002311">
    <property type="component" value="Chromosome VII"/>
</dbReference>
<dbReference type="RNAct" id="P06775">
    <property type="molecule type" value="protein"/>
</dbReference>
<dbReference type="GO" id="GO:0071944">
    <property type="term" value="C:cell periphery"/>
    <property type="evidence" value="ECO:0007005"/>
    <property type="project" value="SGD"/>
</dbReference>
<dbReference type="GO" id="GO:0005783">
    <property type="term" value="C:endoplasmic reticulum"/>
    <property type="evidence" value="ECO:0007005"/>
    <property type="project" value="SGD"/>
</dbReference>
<dbReference type="GO" id="GO:0016020">
    <property type="term" value="C:membrane"/>
    <property type="evidence" value="ECO:0000318"/>
    <property type="project" value="GO_Central"/>
</dbReference>
<dbReference type="GO" id="GO:0005886">
    <property type="term" value="C:plasma membrane"/>
    <property type="evidence" value="ECO:0000315"/>
    <property type="project" value="SGD"/>
</dbReference>
<dbReference type="GO" id="GO:0015171">
    <property type="term" value="F:amino acid transmembrane transporter activity"/>
    <property type="evidence" value="ECO:0000318"/>
    <property type="project" value="GO_Central"/>
</dbReference>
<dbReference type="GO" id="GO:0005291">
    <property type="term" value="F:high-affinity L-histidine transmembrane transporter activity"/>
    <property type="evidence" value="ECO:0000315"/>
    <property type="project" value="SGD"/>
</dbReference>
<dbReference type="GO" id="GO:0003333">
    <property type="term" value="P:amino acid transmembrane transport"/>
    <property type="evidence" value="ECO:0000318"/>
    <property type="project" value="GO_Central"/>
</dbReference>
<dbReference type="GO" id="GO:0015817">
    <property type="term" value="P:histidine transport"/>
    <property type="evidence" value="ECO:0000315"/>
    <property type="project" value="SGD"/>
</dbReference>
<dbReference type="GO" id="GO:0006828">
    <property type="term" value="P:manganese ion transport"/>
    <property type="evidence" value="ECO:0000315"/>
    <property type="project" value="SGD"/>
</dbReference>
<dbReference type="FunFam" id="1.20.1740.10:FF:000074">
    <property type="entry name" value="Histidine permease"/>
    <property type="match status" value="1"/>
</dbReference>
<dbReference type="Gene3D" id="1.20.1740.10">
    <property type="entry name" value="Amino acid/polyamine transporter I"/>
    <property type="match status" value="1"/>
</dbReference>
<dbReference type="InterPro" id="IPR004841">
    <property type="entry name" value="AA-permease/SLC12A_dom"/>
</dbReference>
<dbReference type="InterPro" id="IPR004840">
    <property type="entry name" value="Amino_acid_permease_CS"/>
</dbReference>
<dbReference type="InterPro" id="IPR004762">
    <property type="entry name" value="Amino_acid_permease_fungi"/>
</dbReference>
<dbReference type="InterPro" id="IPR050524">
    <property type="entry name" value="APC_YAT"/>
</dbReference>
<dbReference type="NCBIfam" id="TIGR00913">
    <property type="entry name" value="2A0310"/>
    <property type="match status" value="1"/>
</dbReference>
<dbReference type="PANTHER" id="PTHR43341">
    <property type="entry name" value="AMINO ACID PERMEASE"/>
    <property type="match status" value="1"/>
</dbReference>
<dbReference type="PANTHER" id="PTHR43341:SF13">
    <property type="entry name" value="HISTIDINE PERMEASE"/>
    <property type="match status" value="1"/>
</dbReference>
<dbReference type="Pfam" id="PF00324">
    <property type="entry name" value="AA_permease"/>
    <property type="match status" value="1"/>
</dbReference>
<dbReference type="PROSITE" id="PS00218">
    <property type="entry name" value="AMINO_ACID_PERMEASE_1"/>
    <property type="match status" value="1"/>
</dbReference>
<gene>
    <name type="primary">HIP1</name>
    <name type="ordered locus">YGR191W</name>
    <name type="ORF">G7572</name>
</gene>
<reference key="1">
    <citation type="journal article" date="1985" name="Gene">
        <title>The histidine permease gene (HIP1) of Saccharomyces cerevisiae.</title>
        <authorList>
            <person name="Tanaka J."/>
            <person name="Fink G.R."/>
        </authorList>
    </citation>
    <scope>NUCLEOTIDE SEQUENCE [GENOMIC DNA]</scope>
</reference>
<reference key="2">
    <citation type="journal article" date="1995" name="Yeast">
        <title>The complete sequence of a 9037 bp DNA fragment of the right arm of Saccharomyces cerevisiae chromosome VII.</title>
        <authorList>
            <person name="Arroyo J."/>
            <person name="Garcia-Gonzalez M."/>
            <person name="Garcia-Saez M.I."/>
            <person name="Sanchez M."/>
            <person name="Nombela C."/>
        </authorList>
    </citation>
    <scope>NUCLEOTIDE SEQUENCE [GENOMIC DNA]</scope>
    <source>
        <strain>ATCC 204508 / S288c</strain>
    </source>
</reference>
<reference key="3">
    <citation type="journal article" date="1997" name="Nature">
        <title>The nucleotide sequence of Saccharomyces cerevisiae chromosome VII.</title>
        <authorList>
            <person name="Tettelin H."/>
            <person name="Agostoni-Carbone M.L."/>
            <person name="Albermann K."/>
            <person name="Albers M."/>
            <person name="Arroyo J."/>
            <person name="Backes U."/>
            <person name="Barreiros T."/>
            <person name="Bertani I."/>
            <person name="Bjourson A.J."/>
            <person name="Brueckner M."/>
            <person name="Bruschi C.V."/>
            <person name="Carignani G."/>
            <person name="Castagnoli L."/>
            <person name="Cerdan E."/>
            <person name="Clemente M.L."/>
            <person name="Coblenz A."/>
            <person name="Coglievina M."/>
            <person name="Coissac E."/>
            <person name="Defoor E."/>
            <person name="Del Bino S."/>
            <person name="Delius H."/>
            <person name="Delneri D."/>
            <person name="de Wergifosse P."/>
            <person name="Dujon B."/>
            <person name="Durand P."/>
            <person name="Entian K.-D."/>
            <person name="Eraso P."/>
            <person name="Escribano V."/>
            <person name="Fabiani L."/>
            <person name="Fartmann B."/>
            <person name="Feroli F."/>
            <person name="Feuermann M."/>
            <person name="Frontali L."/>
            <person name="Garcia-Gonzalez M."/>
            <person name="Garcia-Saez M.I."/>
            <person name="Goffeau A."/>
            <person name="Guerreiro P."/>
            <person name="Hani J."/>
            <person name="Hansen M."/>
            <person name="Hebling U."/>
            <person name="Hernandez K."/>
            <person name="Heumann K."/>
            <person name="Hilger F."/>
            <person name="Hofmann B."/>
            <person name="Indge K.J."/>
            <person name="James C.M."/>
            <person name="Klima R."/>
            <person name="Koetter P."/>
            <person name="Kramer B."/>
            <person name="Kramer W."/>
            <person name="Lauquin G."/>
            <person name="Leuther H."/>
            <person name="Louis E.J."/>
            <person name="Maillier E."/>
            <person name="Marconi A."/>
            <person name="Martegani E."/>
            <person name="Mazon M.J."/>
            <person name="Mazzoni C."/>
            <person name="McReynolds A.D.K."/>
            <person name="Melchioretto P."/>
            <person name="Mewes H.-W."/>
            <person name="Minenkova O."/>
            <person name="Mueller-Auer S."/>
            <person name="Nawrocki A."/>
            <person name="Netter P."/>
            <person name="Neu R."/>
            <person name="Nombela C."/>
            <person name="Oliver S.G."/>
            <person name="Panzeri L."/>
            <person name="Paoluzi S."/>
            <person name="Plevani P."/>
            <person name="Portetelle D."/>
            <person name="Portillo F."/>
            <person name="Potier S."/>
            <person name="Purnelle B."/>
            <person name="Rieger M."/>
            <person name="Riles L."/>
            <person name="Rinaldi T."/>
            <person name="Robben J."/>
            <person name="Rodrigues-Pousada C."/>
            <person name="Rodriguez-Belmonte E."/>
            <person name="Rodriguez-Torres A.M."/>
            <person name="Rose M."/>
            <person name="Ruzzi M."/>
            <person name="Saliola M."/>
            <person name="Sanchez-Perez M."/>
            <person name="Schaefer B."/>
            <person name="Schaefer M."/>
            <person name="Scharfe M."/>
            <person name="Schmidheini T."/>
            <person name="Schreer A."/>
            <person name="Skala J."/>
            <person name="Souciet J.-L."/>
            <person name="Steensma H.Y."/>
            <person name="Talla E."/>
            <person name="Thierry A."/>
            <person name="Vandenbol M."/>
            <person name="van der Aart Q.J.M."/>
            <person name="Van Dyck L."/>
            <person name="Vanoni M."/>
            <person name="Verhasselt P."/>
            <person name="Voet M."/>
            <person name="Volckaert G."/>
            <person name="Wambutt R."/>
            <person name="Watson M.D."/>
            <person name="Weber N."/>
            <person name="Wedler E."/>
            <person name="Wedler H."/>
            <person name="Wipfli P."/>
            <person name="Wolf K."/>
            <person name="Wright L.F."/>
            <person name="Zaccaria P."/>
            <person name="Zimmermann M."/>
            <person name="Zollner A."/>
            <person name="Kleine K."/>
        </authorList>
    </citation>
    <scope>NUCLEOTIDE SEQUENCE [LARGE SCALE GENOMIC DNA]</scope>
    <source>
        <strain>ATCC 204508 / S288c</strain>
    </source>
</reference>
<reference key="4">
    <citation type="journal article" date="2014" name="G3 (Bethesda)">
        <title>The reference genome sequence of Saccharomyces cerevisiae: Then and now.</title>
        <authorList>
            <person name="Engel S.R."/>
            <person name="Dietrich F.S."/>
            <person name="Fisk D.G."/>
            <person name="Binkley G."/>
            <person name="Balakrishnan R."/>
            <person name="Costanzo M.C."/>
            <person name="Dwight S.S."/>
            <person name="Hitz B.C."/>
            <person name="Karra K."/>
            <person name="Nash R.S."/>
            <person name="Weng S."/>
            <person name="Wong E.D."/>
            <person name="Lloyd P."/>
            <person name="Skrzypek M.S."/>
            <person name="Miyasato S.R."/>
            <person name="Simison M."/>
            <person name="Cherry J.M."/>
        </authorList>
    </citation>
    <scope>GENOME REANNOTATION</scope>
    <source>
        <strain>ATCC 204508 / S288c</strain>
    </source>
</reference>
<reference key="5">
    <citation type="journal article" date="2003" name="Nature">
        <title>Global analysis of protein expression in yeast.</title>
        <authorList>
            <person name="Ghaemmaghami S."/>
            <person name="Huh W.-K."/>
            <person name="Bower K."/>
            <person name="Howson R.W."/>
            <person name="Belle A."/>
            <person name="Dephoure N."/>
            <person name="O'Shea E.K."/>
            <person name="Weissman J.S."/>
        </authorList>
    </citation>
    <scope>LEVEL OF PROTEIN EXPRESSION [LARGE SCALE ANALYSIS]</scope>
</reference>
<reference key="6">
    <citation type="journal article" date="2006" name="Proc. Natl. Acad. Sci. U.S.A.">
        <title>A global topology map of the Saccharomyces cerevisiae membrane proteome.</title>
        <authorList>
            <person name="Kim H."/>
            <person name="Melen K."/>
            <person name="Oesterberg M."/>
            <person name="von Heijne G."/>
        </authorList>
    </citation>
    <scope>TOPOLOGY [LARGE SCALE ANALYSIS]</scope>
    <source>
        <strain>ATCC 208353 / W303-1A</strain>
    </source>
</reference>
<reference key="7">
    <citation type="journal article" date="2007" name="J. Proteome Res.">
        <title>Large-scale phosphorylation analysis of alpha-factor-arrested Saccharomyces cerevisiae.</title>
        <authorList>
            <person name="Li X."/>
            <person name="Gerber S.A."/>
            <person name="Rudner A.D."/>
            <person name="Beausoleil S.A."/>
            <person name="Haas W."/>
            <person name="Villen J."/>
            <person name="Elias J.E."/>
            <person name="Gygi S.P."/>
        </authorList>
    </citation>
    <scope>IDENTIFICATION BY MASS SPECTROMETRY [LARGE SCALE ANALYSIS]</scope>
    <source>
        <strain>ADR376</strain>
    </source>
</reference>
<reference key="8">
    <citation type="journal article" date="2009" name="Science">
        <title>Global analysis of Cdk1 substrate phosphorylation sites provides insights into evolution.</title>
        <authorList>
            <person name="Holt L.J."/>
            <person name="Tuch B.B."/>
            <person name="Villen J."/>
            <person name="Johnson A.D."/>
            <person name="Gygi S.P."/>
            <person name="Morgan D.O."/>
        </authorList>
    </citation>
    <scope>PHOSPHORYLATION [LARGE SCALE ANALYSIS] AT THR-76</scope>
    <scope>IDENTIFICATION BY MASS SPECTROMETRY [LARGE SCALE ANALYSIS]</scope>
</reference>
<proteinExistence type="evidence at protein level"/>
<evidence type="ECO:0000255" key="1"/>
<evidence type="ECO:0000256" key="2">
    <source>
        <dbReference type="SAM" id="MobiDB-lite"/>
    </source>
</evidence>
<evidence type="ECO:0000269" key="3">
    <source>
    </source>
</evidence>
<evidence type="ECO:0000305" key="4"/>
<evidence type="ECO:0007744" key="5">
    <source>
    </source>
</evidence>
<protein>
    <recommendedName>
        <fullName>Histidine permease</fullName>
    </recommendedName>
</protein>
<keyword id="KW-0029">Amino-acid transport</keyword>
<keyword id="KW-0472">Membrane</keyword>
<keyword id="KW-0597">Phosphoprotein</keyword>
<keyword id="KW-1185">Reference proteome</keyword>
<keyword id="KW-0812">Transmembrane</keyword>
<keyword id="KW-1133">Transmembrane helix</keyword>
<keyword id="KW-0813">Transport</keyword>
<comment type="function">
    <text>High-affinity permease for histidine.</text>
</comment>
<comment type="subcellular location">
    <subcellularLocation>
        <location>Membrane</location>
        <topology>Multi-pass membrane protein</topology>
    </subcellularLocation>
</comment>
<comment type="miscellaneous">
    <text evidence="3">Present with 688 molecules/cell in log phase SD medium.</text>
</comment>
<comment type="similarity">
    <text evidence="4">Belongs to the amino acid-polyamine-organocation (APC) superfamily. YAT (TC 2.A.3.10) family.</text>
</comment>
<feature type="chain" id="PRO_0000054154" description="Histidine permease">
    <location>
        <begin position="1"/>
        <end position="603"/>
    </location>
</feature>
<feature type="topological domain" description="Cytoplasmic" evidence="1">
    <location>
        <begin position="1"/>
        <end position="95"/>
    </location>
</feature>
<feature type="transmembrane region" description="Helical" evidence="1">
    <location>
        <begin position="96"/>
        <end position="116"/>
    </location>
</feature>
<feature type="topological domain" description="Extracellular" evidence="1">
    <location>
        <begin position="117"/>
        <end position="121"/>
    </location>
</feature>
<feature type="transmembrane region" description="Helical" evidence="1">
    <location>
        <begin position="122"/>
        <end position="142"/>
    </location>
</feature>
<feature type="topological domain" description="Cytoplasmic" evidence="1">
    <location>
        <begin position="143"/>
        <end position="165"/>
    </location>
</feature>
<feature type="transmembrane region" description="Helical" evidence="1">
    <location>
        <begin position="166"/>
        <end position="185"/>
    </location>
</feature>
<feature type="topological domain" description="Extracellular" evidence="1">
    <location>
        <begin position="186"/>
        <end position="203"/>
    </location>
</feature>
<feature type="transmembrane region" description="Helical" evidence="1">
    <location>
        <begin position="204"/>
        <end position="223"/>
    </location>
</feature>
<feature type="topological domain" description="Cytoplasmic" evidence="1">
    <location>
        <begin position="224"/>
        <end position="236"/>
    </location>
</feature>
<feature type="transmembrane region" description="Helical" evidence="1">
    <location>
        <begin position="237"/>
        <end position="255"/>
    </location>
</feature>
<feature type="topological domain" description="Extracellular" evidence="1">
    <location>
        <begin position="256"/>
        <end position="279"/>
    </location>
</feature>
<feature type="transmembrane region" description="Helical" evidence="1">
    <location>
        <begin position="280"/>
        <end position="297"/>
    </location>
</feature>
<feature type="topological domain" description="Cytoplasmic" evidence="1">
    <location>
        <begin position="298"/>
        <end position="321"/>
    </location>
</feature>
<feature type="transmembrane region" description="Helical" evidence="1">
    <location>
        <begin position="322"/>
        <end position="342"/>
    </location>
</feature>
<feature type="topological domain" description="Extracellular" evidence="1">
    <location>
        <begin position="343"/>
        <end position="376"/>
    </location>
</feature>
<feature type="transmembrane region" description="Helical" evidence="1">
    <location>
        <begin position="377"/>
        <end position="396"/>
    </location>
</feature>
<feature type="topological domain" description="Cytoplasmic" evidence="1">
    <location>
        <begin position="397"/>
        <end position="423"/>
    </location>
</feature>
<feature type="transmembrane region" description="Helical" evidence="1">
    <location>
        <begin position="424"/>
        <end position="442"/>
    </location>
</feature>
<feature type="topological domain" description="Extracellular" evidence="1">
    <location>
        <begin position="443"/>
        <end position="451"/>
    </location>
</feature>
<feature type="transmembrane region" description="Helical" evidence="1">
    <location>
        <begin position="452"/>
        <end position="472"/>
    </location>
</feature>
<feature type="topological domain" description="Cytoplasmic" evidence="1">
    <location>
        <begin position="473"/>
        <end position="491"/>
    </location>
</feature>
<feature type="transmembrane region" description="Helical" evidence="1">
    <location>
        <begin position="492"/>
        <end position="510"/>
    </location>
</feature>
<feature type="topological domain" description="Extracellular" evidence="1">
    <location>
        <begin position="511"/>
        <end position="530"/>
    </location>
</feature>
<feature type="transmembrane region" description="Helical" evidence="1">
    <location>
        <begin position="531"/>
        <end position="549"/>
    </location>
</feature>
<feature type="topological domain" description="Cytoplasmic" evidence="1">
    <location>
        <begin position="550"/>
        <end position="603"/>
    </location>
</feature>
<feature type="region of interest" description="Disordered" evidence="2">
    <location>
        <begin position="45"/>
        <end position="78"/>
    </location>
</feature>
<feature type="compositionally biased region" description="Polar residues" evidence="2">
    <location>
        <begin position="51"/>
        <end position="65"/>
    </location>
</feature>
<feature type="compositionally biased region" description="Basic and acidic residues" evidence="2">
    <location>
        <begin position="66"/>
        <end position="75"/>
    </location>
</feature>
<feature type="modified residue" description="Phosphothreonine" evidence="5">
    <location>
        <position position="76"/>
    </location>
</feature>